<name>RS9_STRT1</name>
<organism>
    <name type="scientific">Streptococcus thermophilus (strain CNRZ 1066)</name>
    <dbReference type="NCBI Taxonomy" id="299768"/>
    <lineage>
        <taxon>Bacteria</taxon>
        <taxon>Bacillati</taxon>
        <taxon>Bacillota</taxon>
        <taxon>Bacilli</taxon>
        <taxon>Lactobacillales</taxon>
        <taxon>Streptococcaceae</taxon>
        <taxon>Streptococcus</taxon>
    </lineage>
</organism>
<keyword id="KW-0687">Ribonucleoprotein</keyword>
<keyword id="KW-0689">Ribosomal protein</keyword>
<reference key="1">
    <citation type="journal article" date="2004" name="Nat. Biotechnol.">
        <title>Complete sequence and comparative genome analysis of the dairy bacterium Streptococcus thermophilus.</title>
        <authorList>
            <person name="Bolotin A."/>
            <person name="Quinquis B."/>
            <person name="Renault P."/>
            <person name="Sorokin A."/>
            <person name="Ehrlich S.D."/>
            <person name="Kulakauskas S."/>
            <person name="Lapidus A."/>
            <person name="Goltsman E."/>
            <person name="Mazur M."/>
            <person name="Pusch G.D."/>
            <person name="Fonstein M."/>
            <person name="Overbeek R."/>
            <person name="Kyprides N."/>
            <person name="Purnelle B."/>
            <person name="Prozzi D."/>
            <person name="Ngui K."/>
            <person name="Masuy D."/>
            <person name="Hancy F."/>
            <person name="Burteau S."/>
            <person name="Boutry M."/>
            <person name="Delcour J."/>
            <person name="Goffeau A."/>
            <person name="Hols P."/>
        </authorList>
    </citation>
    <scope>NUCLEOTIDE SEQUENCE [LARGE SCALE GENOMIC DNA]</scope>
    <source>
        <strain>CNRZ 1066</strain>
    </source>
</reference>
<protein>
    <recommendedName>
        <fullName evidence="1">Small ribosomal subunit protein uS9</fullName>
    </recommendedName>
    <alternativeName>
        <fullName evidence="2">30S ribosomal protein S9</fullName>
    </alternativeName>
</protein>
<sequence length="130" mass="14239">MAQAQYAGTGRRKNAVARVRLVPGTGKITVNKKDLEEYIPHADLRLVINQPFAVTSTEGSYDVHVNVVGGGYAGQSGAIRHGIARALLQVDPDFRDSLKRAGLLTRDARMVERKKPGLKKARKASQFSKR</sequence>
<feature type="chain" id="PRO_1000051348" description="Small ribosomal subunit protein uS9">
    <location>
        <begin position="1"/>
        <end position="130"/>
    </location>
</feature>
<dbReference type="EMBL" id="CP000024">
    <property type="protein sequence ID" value="AAV61710.1"/>
    <property type="molecule type" value="Genomic_DNA"/>
</dbReference>
<dbReference type="RefSeq" id="WP_002947796.1">
    <property type="nucleotide sequence ID" value="NC_006449.1"/>
</dbReference>
<dbReference type="SMR" id="Q5M1V6"/>
<dbReference type="GeneID" id="66898024"/>
<dbReference type="KEGG" id="stc:str0094"/>
<dbReference type="HOGENOM" id="CLU_046483_2_1_9"/>
<dbReference type="GO" id="GO:0022627">
    <property type="term" value="C:cytosolic small ribosomal subunit"/>
    <property type="evidence" value="ECO:0007669"/>
    <property type="project" value="TreeGrafter"/>
</dbReference>
<dbReference type="GO" id="GO:0003723">
    <property type="term" value="F:RNA binding"/>
    <property type="evidence" value="ECO:0007669"/>
    <property type="project" value="TreeGrafter"/>
</dbReference>
<dbReference type="GO" id="GO:0003735">
    <property type="term" value="F:structural constituent of ribosome"/>
    <property type="evidence" value="ECO:0007669"/>
    <property type="project" value="InterPro"/>
</dbReference>
<dbReference type="GO" id="GO:0006412">
    <property type="term" value="P:translation"/>
    <property type="evidence" value="ECO:0007669"/>
    <property type="project" value="UniProtKB-UniRule"/>
</dbReference>
<dbReference type="FunFam" id="3.30.230.10:FF:000001">
    <property type="entry name" value="30S ribosomal protein S9"/>
    <property type="match status" value="1"/>
</dbReference>
<dbReference type="Gene3D" id="3.30.230.10">
    <property type="match status" value="1"/>
</dbReference>
<dbReference type="HAMAP" id="MF_00532_B">
    <property type="entry name" value="Ribosomal_uS9_B"/>
    <property type="match status" value="1"/>
</dbReference>
<dbReference type="InterPro" id="IPR020568">
    <property type="entry name" value="Ribosomal_Su5_D2-typ_SF"/>
</dbReference>
<dbReference type="InterPro" id="IPR000754">
    <property type="entry name" value="Ribosomal_uS9"/>
</dbReference>
<dbReference type="InterPro" id="IPR023035">
    <property type="entry name" value="Ribosomal_uS9_bac/plastid"/>
</dbReference>
<dbReference type="InterPro" id="IPR020574">
    <property type="entry name" value="Ribosomal_uS9_CS"/>
</dbReference>
<dbReference type="InterPro" id="IPR014721">
    <property type="entry name" value="Ribsml_uS5_D2-typ_fold_subgr"/>
</dbReference>
<dbReference type="NCBIfam" id="NF001099">
    <property type="entry name" value="PRK00132.1"/>
    <property type="match status" value="1"/>
</dbReference>
<dbReference type="PANTHER" id="PTHR21569">
    <property type="entry name" value="RIBOSOMAL PROTEIN S9"/>
    <property type="match status" value="1"/>
</dbReference>
<dbReference type="PANTHER" id="PTHR21569:SF1">
    <property type="entry name" value="SMALL RIBOSOMAL SUBUNIT PROTEIN US9M"/>
    <property type="match status" value="1"/>
</dbReference>
<dbReference type="Pfam" id="PF00380">
    <property type="entry name" value="Ribosomal_S9"/>
    <property type="match status" value="1"/>
</dbReference>
<dbReference type="SUPFAM" id="SSF54211">
    <property type="entry name" value="Ribosomal protein S5 domain 2-like"/>
    <property type="match status" value="1"/>
</dbReference>
<dbReference type="PROSITE" id="PS00360">
    <property type="entry name" value="RIBOSOMAL_S9"/>
    <property type="match status" value="1"/>
</dbReference>
<accession>Q5M1V6</accession>
<gene>
    <name evidence="1" type="primary">rpsI</name>
    <name type="ordered locus">str0094</name>
</gene>
<evidence type="ECO:0000255" key="1">
    <source>
        <dbReference type="HAMAP-Rule" id="MF_00532"/>
    </source>
</evidence>
<evidence type="ECO:0000305" key="2"/>
<proteinExistence type="inferred from homology"/>
<comment type="similarity">
    <text evidence="1">Belongs to the universal ribosomal protein uS9 family.</text>
</comment>